<name>SYDND_LARHH</name>
<accession>C1DB91</accession>
<feature type="chain" id="PRO_1000198995" description="Aspartate--tRNA(Asp/Asn) ligase">
    <location>
        <begin position="1"/>
        <end position="603"/>
    </location>
</feature>
<feature type="region of interest" description="Aspartate" evidence="1">
    <location>
        <begin position="196"/>
        <end position="199"/>
    </location>
</feature>
<feature type="binding site" evidence="1">
    <location>
        <position position="172"/>
    </location>
    <ligand>
        <name>L-aspartate</name>
        <dbReference type="ChEBI" id="CHEBI:29991"/>
    </ligand>
</feature>
<feature type="binding site" evidence="1">
    <location>
        <begin position="218"/>
        <end position="220"/>
    </location>
    <ligand>
        <name>ATP</name>
        <dbReference type="ChEBI" id="CHEBI:30616"/>
    </ligand>
</feature>
<feature type="binding site" evidence="1">
    <location>
        <position position="218"/>
    </location>
    <ligand>
        <name>L-aspartate</name>
        <dbReference type="ChEBI" id="CHEBI:29991"/>
    </ligand>
</feature>
<feature type="binding site" evidence="1">
    <location>
        <position position="227"/>
    </location>
    <ligand>
        <name>ATP</name>
        <dbReference type="ChEBI" id="CHEBI:30616"/>
    </ligand>
</feature>
<feature type="binding site" evidence="1">
    <location>
        <position position="457"/>
    </location>
    <ligand>
        <name>L-aspartate</name>
        <dbReference type="ChEBI" id="CHEBI:29991"/>
    </ligand>
</feature>
<feature type="binding site" evidence="1">
    <location>
        <position position="491"/>
    </location>
    <ligand>
        <name>ATP</name>
        <dbReference type="ChEBI" id="CHEBI:30616"/>
    </ligand>
</feature>
<feature type="binding site" evidence="1">
    <location>
        <position position="498"/>
    </location>
    <ligand>
        <name>L-aspartate</name>
        <dbReference type="ChEBI" id="CHEBI:29991"/>
    </ligand>
</feature>
<feature type="binding site" evidence="1">
    <location>
        <begin position="543"/>
        <end position="546"/>
    </location>
    <ligand>
        <name>ATP</name>
        <dbReference type="ChEBI" id="CHEBI:30616"/>
    </ligand>
</feature>
<feature type="site" description="Important for tRNA non-discrimination" evidence="1">
    <location>
        <position position="30"/>
    </location>
</feature>
<feature type="site" description="Important for tRNA non-discrimination" evidence="1">
    <location>
        <position position="81"/>
    </location>
</feature>
<dbReference type="EC" id="6.1.1.23" evidence="1"/>
<dbReference type="EMBL" id="CP001154">
    <property type="protein sequence ID" value="ACO75430.1"/>
    <property type="molecule type" value="Genomic_DNA"/>
</dbReference>
<dbReference type="RefSeq" id="WP_012697916.1">
    <property type="nucleotide sequence ID" value="NC_012559.1"/>
</dbReference>
<dbReference type="SMR" id="C1DB91"/>
<dbReference type="STRING" id="557598.LHK_02448"/>
<dbReference type="KEGG" id="lhk:LHK_02448"/>
<dbReference type="eggNOG" id="COG0173">
    <property type="taxonomic scope" value="Bacteria"/>
</dbReference>
<dbReference type="HOGENOM" id="CLU_014330_3_2_4"/>
<dbReference type="Proteomes" id="UP000002010">
    <property type="component" value="Chromosome"/>
</dbReference>
<dbReference type="GO" id="GO:0005737">
    <property type="term" value="C:cytoplasm"/>
    <property type="evidence" value="ECO:0007669"/>
    <property type="project" value="UniProtKB-SubCell"/>
</dbReference>
<dbReference type="GO" id="GO:0004815">
    <property type="term" value="F:aspartate-tRNA ligase activity"/>
    <property type="evidence" value="ECO:0007669"/>
    <property type="project" value="UniProtKB-UniRule"/>
</dbReference>
<dbReference type="GO" id="GO:0050560">
    <property type="term" value="F:aspartate-tRNA(Asn) ligase activity"/>
    <property type="evidence" value="ECO:0007669"/>
    <property type="project" value="UniProtKB-EC"/>
</dbReference>
<dbReference type="GO" id="GO:0005524">
    <property type="term" value="F:ATP binding"/>
    <property type="evidence" value="ECO:0007669"/>
    <property type="project" value="UniProtKB-UniRule"/>
</dbReference>
<dbReference type="GO" id="GO:0003676">
    <property type="term" value="F:nucleic acid binding"/>
    <property type="evidence" value="ECO:0007669"/>
    <property type="project" value="InterPro"/>
</dbReference>
<dbReference type="GO" id="GO:0006422">
    <property type="term" value="P:aspartyl-tRNA aminoacylation"/>
    <property type="evidence" value="ECO:0007669"/>
    <property type="project" value="UniProtKB-UniRule"/>
</dbReference>
<dbReference type="CDD" id="cd00777">
    <property type="entry name" value="AspRS_core"/>
    <property type="match status" value="1"/>
</dbReference>
<dbReference type="CDD" id="cd04317">
    <property type="entry name" value="EcAspRS_like_N"/>
    <property type="match status" value="1"/>
</dbReference>
<dbReference type="Gene3D" id="3.30.930.10">
    <property type="entry name" value="Bira Bifunctional Protein, Domain 2"/>
    <property type="match status" value="1"/>
</dbReference>
<dbReference type="Gene3D" id="3.30.1360.30">
    <property type="entry name" value="GAD-like domain"/>
    <property type="match status" value="1"/>
</dbReference>
<dbReference type="Gene3D" id="2.40.50.140">
    <property type="entry name" value="Nucleic acid-binding proteins"/>
    <property type="match status" value="1"/>
</dbReference>
<dbReference type="HAMAP" id="MF_00044">
    <property type="entry name" value="Asp_tRNA_synth_type1"/>
    <property type="match status" value="1"/>
</dbReference>
<dbReference type="InterPro" id="IPR004364">
    <property type="entry name" value="Aa-tRNA-synt_II"/>
</dbReference>
<dbReference type="InterPro" id="IPR006195">
    <property type="entry name" value="aa-tRNA-synth_II"/>
</dbReference>
<dbReference type="InterPro" id="IPR045864">
    <property type="entry name" value="aa-tRNA-synth_II/BPL/LPL"/>
</dbReference>
<dbReference type="InterPro" id="IPR004524">
    <property type="entry name" value="Asp-tRNA-ligase_1"/>
</dbReference>
<dbReference type="InterPro" id="IPR047089">
    <property type="entry name" value="Asp-tRNA-ligase_1_N"/>
</dbReference>
<dbReference type="InterPro" id="IPR002312">
    <property type="entry name" value="Asp/Asn-tRNA-synth_IIb"/>
</dbReference>
<dbReference type="InterPro" id="IPR047090">
    <property type="entry name" value="AspRS_core"/>
</dbReference>
<dbReference type="InterPro" id="IPR004115">
    <property type="entry name" value="GAD-like_sf"/>
</dbReference>
<dbReference type="InterPro" id="IPR029351">
    <property type="entry name" value="GAD_dom"/>
</dbReference>
<dbReference type="InterPro" id="IPR012340">
    <property type="entry name" value="NA-bd_OB-fold"/>
</dbReference>
<dbReference type="InterPro" id="IPR004365">
    <property type="entry name" value="NA-bd_OB_tRNA"/>
</dbReference>
<dbReference type="NCBIfam" id="TIGR00459">
    <property type="entry name" value="aspS_bact"/>
    <property type="match status" value="1"/>
</dbReference>
<dbReference type="NCBIfam" id="NF001750">
    <property type="entry name" value="PRK00476.1"/>
    <property type="match status" value="1"/>
</dbReference>
<dbReference type="PANTHER" id="PTHR22594:SF5">
    <property type="entry name" value="ASPARTATE--TRNA LIGASE, MITOCHONDRIAL"/>
    <property type="match status" value="1"/>
</dbReference>
<dbReference type="PANTHER" id="PTHR22594">
    <property type="entry name" value="ASPARTYL/LYSYL-TRNA SYNTHETASE"/>
    <property type="match status" value="1"/>
</dbReference>
<dbReference type="Pfam" id="PF02938">
    <property type="entry name" value="GAD"/>
    <property type="match status" value="1"/>
</dbReference>
<dbReference type="Pfam" id="PF00152">
    <property type="entry name" value="tRNA-synt_2"/>
    <property type="match status" value="1"/>
</dbReference>
<dbReference type="Pfam" id="PF01336">
    <property type="entry name" value="tRNA_anti-codon"/>
    <property type="match status" value="1"/>
</dbReference>
<dbReference type="PRINTS" id="PR01042">
    <property type="entry name" value="TRNASYNTHASP"/>
</dbReference>
<dbReference type="SUPFAM" id="SSF55681">
    <property type="entry name" value="Class II aaRS and biotin synthetases"/>
    <property type="match status" value="1"/>
</dbReference>
<dbReference type="SUPFAM" id="SSF55261">
    <property type="entry name" value="GAD domain-like"/>
    <property type="match status" value="1"/>
</dbReference>
<dbReference type="SUPFAM" id="SSF50249">
    <property type="entry name" value="Nucleic acid-binding proteins"/>
    <property type="match status" value="1"/>
</dbReference>
<dbReference type="PROSITE" id="PS50862">
    <property type="entry name" value="AA_TRNA_LIGASE_II"/>
    <property type="match status" value="1"/>
</dbReference>
<proteinExistence type="inferred from homology"/>
<protein>
    <recommendedName>
        <fullName evidence="1">Aspartate--tRNA(Asp/Asn) ligase</fullName>
        <ecNumber evidence="1">6.1.1.23</ecNumber>
    </recommendedName>
    <alternativeName>
        <fullName evidence="1">Aspartyl-tRNA synthetase</fullName>
        <shortName evidence="1">AspRS</shortName>
    </alternativeName>
    <alternativeName>
        <fullName evidence="1">Non-discriminating aspartyl-tRNA synthetase</fullName>
        <shortName evidence="1">ND-AspRS</shortName>
    </alternativeName>
</protein>
<reference key="1">
    <citation type="journal article" date="2009" name="PLoS Genet.">
        <title>The complete genome and proteome of Laribacter hongkongensis reveal potential mechanisms for adaptations to different temperatures and habitats.</title>
        <authorList>
            <person name="Woo P.C.Y."/>
            <person name="Lau S.K.P."/>
            <person name="Tse H."/>
            <person name="Teng J.L.L."/>
            <person name="Curreem S.O."/>
            <person name="Tsang A.K.L."/>
            <person name="Fan R.Y.Y."/>
            <person name="Wong G.K.M."/>
            <person name="Huang Y."/>
            <person name="Loman N.J."/>
            <person name="Snyder L.A.S."/>
            <person name="Cai J.J."/>
            <person name="Huang J.-D."/>
            <person name="Mak W."/>
            <person name="Pallen M.J."/>
            <person name="Lok S."/>
            <person name="Yuen K.-Y."/>
        </authorList>
    </citation>
    <scope>NUCLEOTIDE SEQUENCE [LARGE SCALE GENOMIC DNA]</scope>
    <source>
        <strain>HLHK9</strain>
    </source>
</reference>
<gene>
    <name evidence="1" type="primary">aspS</name>
    <name type="ordered locus">LHK_02448</name>
</gene>
<organism>
    <name type="scientific">Laribacter hongkongensis (strain HLHK9)</name>
    <dbReference type="NCBI Taxonomy" id="557598"/>
    <lineage>
        <taxon>Bacteria</taxon>
        <taxon>Pseudomonadati</taxon>
        <taxon>Pseudomonadota</taxon>
        <taxon>Betaproteobacteria</taxon>
        <taxon>Neisseriales</taxon>
        <taxon>Aquaspirillaceae</taxon>
        <taxon>Laribacter</taxon>
    </lineage>
</organism>
<sequence length="603" mass="67603">MRTDYCGLIDTRYLDQTVTVKGWVHRRRDHGGVIFIDLRDREGLVQVVIDPDTPEAFATADSARNEFVLSITGRVRRRPEGTTNAKMISGEIELLAKEIEILNAAATPPFQIDDENLSETVRLTNRVIDLRRPAMQKNLRLRYQVAMGVRRYLDAQGFIDIETPMLTRSTPEGARDYLVPSRVHPGEFFALPQSPQLFKQLLMVAGFDRYYQIVKCFRDEDLRADRQPEFTQIDLETSFLNEDDIMDITEGMARQVFHDAMDVELGDFPRMTYADAMHYYGSDKPDLRVSLKFAELTDVMKDVPFKVFNAAANLPNGRVVALRVPGGAKLSRKEIDEYTQFVGIYGAKGLAYIKVNDVSKLTTDETSGLQSPIVKNLTEGVLKSIVERTGAENGDIIFFGADKAKVVNEAIGALRIRIGHEHGEAGGYFVREWRPLWVVDFPMFEYDEDDDRWTACHHPFTSPKPGHEDLMATDPGACIARAYDMVLNGWEIGGGSIRIHRADVQEKVFGALKISPEEQQNKFGFLLDNLKFGAPPHGGLAFGLDRLVTLMAGADSIRDVIAFPKTQRAQCLLTNAPNAVDEKQLKELSLRLRQKADVAGGAA</sequence>
<evidence type="ECO:0000255" key="1">
    <source>
        <dbReference type="HAMAP-Rule" id="MF_00044"/>
    </source>
</evidence>
<keyword id="KW-0030">Aminoacyl-tRNA synthetase</keyword>
<keyword id="KW-0067">ATP-binding</keyword>
<keyword id="KW-0963">Cytoplasm</keyword>
<keyword id="KW-0436">Ligase</keyword>
<keyword id="KW-0547">Nucleotide-binding</keyword>
<keyword id="KW-0648">Protein biosynthesis</keyword>
<keyword id="KW-1185">Reference proteome</keyword>
<comment type="function">
    <text evidence="1">Aspartyl-tRNA synthetase with relaxed tRNA specificity since it is able to aspartylate not only its cognate tRNA(Asp) but also tRNA(Asn). Reaction proceeds in two steps: L-aspartate is first activated by ATP to form Asp-AMP and then transferred to the acceptor end of tRNA(Asp/Asn).</text>
</comment>
<comment type="catalytic activity">
    <reaction evidence="1">
        <text>tRNA(Asx) + L-aspartate + ATP = L-aspartyl-tRNA(Asx) + AMP + diphosphate</text>
        <dbReference type="Rhea" id="RHEA:18349"/>
        <dbReference type="Rhea" id="RHEA-COMP:9710"/>
        <dbReference type="Rhea" id="RHEA-COMP:9711"/>
        <dbReference type="ChEBI" id="CHEBI:29991"/>
        <dbReference type="ChEBI" id="CHEBI:30616"/>
        <dbReference type="ChEBI" id="CHEBI:33019"/>
        <dbReference type="ChEBI" id="CHEBI:78442"/>
        <dbReference type="ChEBI" id="CHEBI:78516"/>
        <dbReference type="ChEBI" id="CHEBI:456215"/>
        <dbReference type="EC" id="6.1.1.23"/>
    </reaction>
</comment>
<comment type="subunit">
    <text evidence="1">Homodimer.</text>
</comment>
<comment type="subcellular location">
    <subcellularLocation>
        <location evidence="1">Cytoplasm</location>
    </subcellularLocation>
</comment>
<comment type="similarity">
    <text evidence="1">Belongs to the class-II aminoacyl-tRNA synthetase family. Type 1 subfamily.</text>
</comment>